<reference key="1">
    <citation type="journal article" date="2009" name="BMC Genomics">
        <title>Complete genome sequence of the sugarcane nitrogen-fixing endophyte Gluconacetobacter diazotrophicus Pal5.</title>
        <authorList>
            <person name="Bertalan M."/>
            <person name="Albano R."/>
            <person name="de Padua V."/>
            <person name="Rouws L."/>
            <person name="Rojas C."/>
            <person name="Hemerly A."/>
            <person name="Teixeira K."/>
            <person name="Schwab S."/>
            <person name="Araujo J."/>
            <person name="Oliveira A."/>
            <person name="Franca L."/>
            <person name="Magalhaes V."/>
            <person name="Alqueres S."/>
            <person name="Cardoso A."/>
            <person name="Almeida W."/>
            <person name="Loureiro M.M."/>
            <person name="Nogueira E."/>
            <person name="Cidade D."/>
            <person name="Oliveira D."/>
            <person name="Simao T."/>
            <person name="Macedo J."/>
            <person name="Valadao A."/>
            <person name="Dreschsel M."/>
            <person name="Freitas F."/>
            <person name="Vidal M."/>
            <person name="Guedes H."/>
            <person name="Rodrigues E."/>
            <person name="Meneses C."/>
            <person name="Brioso P."/>
            <person name="Pozzer L."/>
            <person name="Figueiredo D."/>
            <person name="Montano H."/>
            <person name="Junior J."/>
            <person name="de Souza Filho G."/>
            <person name="Martin Quintana Flores V."/>
            <person name="Ferreira B."/>
            <person name="Branco A."/>
            <person name="Gonzalez P."/>
            <person name="Guillobel H."/>
            <person name="Lemos M."/>
            <person name="Seibel L."/>
            <person name="Macedo J."/>
            <person name="Alves-Ferreira M."/>
            <person name="Sachetto-Martins G."/>
            <person name="Coelho A."/>
            <person name="Santos E."/>
            <person name="Amaral G."/>
            <person name="Neves A."/>
            <person name="Pacheco A.B."/>
            <person name="Carvalho D."/>
            <person name="Lery L."/>
            <person name="Bisch P."/>
            <person name="Rossle S.C."/>
            <person name="Urmenyi T."/>
            <person name="Rael Pereira A."/>
            <person name="Silva R."/>
            <person name="Rondinelli E."/>
            <person name="von Kruger W."/>
            <person name="Martins O."/>
            <person name="Baldani J.I."/>
            <person name="Ferreira P.C."/>
        </authorList>
    </citation>
    <scope>NUCLEOTIDE SEQUENCE [LARGE SCALE GENOMIC DNA]</scope>
    <source>
        <strain>ATCC 49037 / DSM 5601 / CCUG 37298 / CIP 103539 / LMG 7603 / PAl5</strain>
    </source>
</reference>
<reference key="2">
    <citation type="journal article" date="2010" name="Stand. Genomic Sci.">
        <title>Two genome sequences of the same bacterial strain, Gluconacetobacter diazotrophicus PAl 5, suggest a new standard in genome sequence submission.</title>
        <authorList>
            <person name="Giongo A."/>
            <person name="Tyler H.L."/>
            <person name="Zipperer U.N."/>
            <person name="Triplett E.W."/>
        </authorList>
    </citation>
    <scope>NUCLEOTIDE SEQUENCE [LARGE SCALE GENOMIC DNA]</scope>
    <source>
        <strain>ATCC 49037 / DSM 5601 / CCUG 37298 / CIP 103539 / LMG 7603 / PAl5</strain>
    </source>
</reference>
<evidence type="ECO:0000255" key="1">
    <source>
        <dbReference type="HAMAP-Rule" id="MF_01394"/>
    </source>
</evidence>
<evidence type="ECO:0000305" key="2"/>
<organism>
    <name type="scientific">Gluconacetobacter diazotrophicus (strain ATCC 49037 / DSM 5601 / CCUG 37298 / CIP 103539 / LMG 7603 / PAl5)</name>
    <dbReference type="NCBI Taxonomy" id="272568"/>
    <lineage>
        <taxon>Bacteria</taxon>
        <taxon>Pseudomonadati</taxon>
        <taxon>Pseudomonadota</taxon>
        <taxon>Alphaproteobacteria</taxon>
        <taxon>Acetobacterales</taxon>
        <taxon>Acetobacteraceae</taxon>
        <taxon>Gluconacetobacter</taxon>
    </lineage>
</organism>
<dbReference type="EC" id="7.1.1.-" evidence="1"/>
<dbReference type="EMBL" id="AM889285">
    <property type="protein sequence ID" value="CAP56414.1"/>
    <property type="molecule type" value="Genomic_DNA"/>
</dbReference>
<dbReference type="EMBL" id="CP001189">
    <property type="protein sequence ID" value="ACI50508.1"/>
    <property type="status" value="ALT_INIT"/>
    <property type="molecule type" value="Genomic_DNA"/>
</dbReference>
<dbReference type="RefSeq" id="WP_012553306.1">
    <property type="nucleotide sequence ID" value="NC_011365.1"/>
</dbReference>
<dbReference type="SMR" id="A9HNA0"/>
<dbReference type="STRING" id="272568.GDI2471"/>
<dbReference type="KEGG" id="gdi:GDI2471"/>
<dbReference type="KEGG" id="gdj:Gdia_0718"/>
<dbReference type="eggNOG" id="COG0838">
    <property type="taxonomic scope" value="Bacteria"/>
</dbReference>
<dbReference type="HOGENOM" id="CLU_119549_2_0_5"/>
<dbReference type="OrthoDB" id="9791970at2"/>
<dbReference type="Proteomes" id="UP000001176">
    <property type="component" value="Chromosome"/>
</dbReference>
<dbReference type="GO" id="GO:0030964">
    <property type="term" value="C:NADH dehydrogenase complex"/>
    <property type="evidence" value="ECO:0007669"/>
    <property type="project" value="TreeGrafter"/>
</dbReference>
<dbReference type="GO" id="GO:0005886">
    <property type="term" value="C:plasma membrane"/>
    <property type="evidence" value="ECO:0007669"/>
    <property type="project" value="UniProtKB-SubCell"/>
</dbReference>
<dbReference type="GO" id="GO:0008137">
    <property type="term" value="F:NADH dehydrogenase (ubiquinone) activity"/>
    <property type="evidence" value="ECO:0007669"/>
    <property type="project" value="InterPro"/>
</dbReference>
<dbReference type="GO" id="GO:0050136">
    <property type="term" value="F:NADH:ubiquinone reductase (non-electrogenic) activity"/>
    <property type="evidence" value="ECO:0007669"/>
    <property type="project" value="UniProtKB-UniRule"/>
</dbReference>
<dbReference type="GO" id="GO:0048038">
    <property type="term" value="F:quinone binding"/>
    <property type="evidence" value="ECO:0007669"/>
    <property type="project" value="UniProtKB-KW"/>
</dbReference>
<dbReference type="Gene3D" id="1.20.58.1610">
    <property type="entry name" value="NADH:ubiquinone/plastoquinone oxidoreductase, chain 3"/>
    <property type="match status" value="1"/>
</dbReference>
<dbReference type="HAMAP" id="MF_01394">
    <property type="entry name" value="NDH1_NuoA"/>
    <property type="match status" value="1"/>
</dbReference>
<dbReference type="InterPro" id="IPR023043">
    <property type="entry name" value="NAD(P)H_OxRDtase_bac/plastid"/>
</dbReference>
<dbReference type="InterPro" id="IPR000440">
    <property type="entry name" value="NADH_UbQ/plastoQ_OxRdtase_su3"/>
</dbReference>
<dbReference type="InterPro" id="IPR038430">
    <property type="entry name" value="NDAH_ubi_oxred_su3_sf"/>
</dbReference>
<dbReference type="PANTHER" id="PTHR11058:SF21">
    <property type="entry name" value="NADH-QUINONE OXIDOREDUCTASE SUBUNIT A"/>
    <property type="match status" value="1"/>
</dbReference>
<dbReference type="PANTHER" id="PTHR11058">
    <property type="entry name" value="NADH-UBIQUINONE OXIDOREDUCTASE CHAIN 3"/>
    <property type="match status" value="1"/>
</dbReference>
<dbReference type="Pfam" id="PF00507">
    <property type="entry name" value="Oxidored_q4"/>
    <property type="match status" value="1"/>
</dbReference>
<comment type="function">
    <text evidence="1">NDH-1 shuttles electrons from NADH, via FMN and iron-sulfur (Fe-S) centers, to quinones in the respiratory chain. The immediate electron acceptor for the enzyme in this species is believed to be ubiquinone. Couples the redox reaction to proton translocation (for every two electrons transferred, four hydrogen ions are translocated across the cytoplasmic membrane), and thus conserves the redox energy in a proton gradient.</text>
</comment>
<comment type="catalytic activity">
    <reaction evidence="1">
        <text>a quinone + NADH + 5 H(+)(in) = a quinol + NAD(+) + 4 H(+)(out)</text>
        <dbReference type="Rhea" id="RHEA:57888"/>
        <dbReference type="ChEBI" id="CHEBI:15378"/>
        <dbReference type="ChEBI" id="CHEBI:24646"/>
        <dbReference type="ChEBI" id="CHEBI:57540"/>
        <dbReference type="ChEBI" id="CHEBI:57945"/>
        <dbReference type="ChEBI" id="CHEBI:132124"/>
    </reaction>
</comment>
<comment type="subunit">
    <text evidence="1">NDH-1 is composed of 14 different subunits. Subunits NuoA, H, J, K, L, M, N constitute the membrane sector of the complex.</text>
</comment>
<comment type="subcellular location">
    <subcellularLocation>
        <location evidence="1">Cell inner membrane</location>
        <topology evidence="1">Multi-pass membrane protein</topology>
    </subcellularLocation>
</comment>
<comment type="similarity">
    <text evidence="1">Belongs to the complex I subunit 3 family.</text>
</comment>
<comment type="sequence caution" evidence="2">
    <conflict type="erroneous initiation">
        <sequence resource="EMBL-CDS" id="ACI50508"/>
    </conflict>
</comment>
<name>NUOA_GLUDA</name>
<keyword id="KW-0997">Cell inner membrane</keyword>
<keyword id="KW-1003">Cell membrane</keyword>
<keyword id="KW-0472">Membrane</keyword>
<keyword id="KW-0520">NAD</keyword>
<keyword id="KW-0874">Quinone</keyword>
<keyword id="KW-1185">Reference proteome</keyword>
<keyword id="KW-1278">Translocase</keyword>
<keyword id="KW-0812">Transmembrane</keyword>
<keyword id="KW-1133">Transmembrane helix</keyword>
<keyword id="KW-0813">Transport</keyword>
<keyword id="KW-0830">Ubiquinone</keyword>
<proteinExistence type="inferred from homology"/>
<sequence length="147" mass="15854">MLAMSDFCTQHPLFSYAVAIVVLLAAMLGLGAVSGTRRVGAARGRSMDLPFESGVLPVGSAHLRIPVQYYLVAMLFVIFDVESVFLFSWAPVAVGAGWRGYGAVVVFVASLAAALAYVWRWGALDWGPVPRRRIDYRRAGDASCAGR</sequence>
<gene>
    <name evidence="1" type="primary">nuoA</name>
    <name type="ordered locus">GDI2471</name>
    <name type="ordered locus">Gdia_0718</name>
</gene>
<feature type="chain" id="PRO_0000362698" description="NADH-quinone oxidoreductase subunit A">
    <location>
        <begin position="1"/>
        <end position="147"/>
    </location>
</feature>
<feature type="transmembrane region" description="Helical" evidence="1">
    <location>
        <begin position="13"/>
        <end position="33"/>
    </location>
</feature>
<feature type="transmembrane region" description="Helical" evidence="1">
    <location>
        <begin position="70"/>
        <end position="90"/>
    </location>
</feature>
<feature type="transmembrane region" description="Helical" evidence="1">
    <location>
        <begin position="104"/>
        <end position="124"/>
    </location>
</feature>
<protein>
    <recommendedName>
        <fullName evidence="1">NADH-quinone oxidoreductase subunit A</fullName>
        <ecNumber evidence="1">7.1.1.-</ecNumber>
    </recommendedName>
    <alternativeName>
        <fullName evidence="1">NADH dehydrogenase I subunit A</fullName>
    </alternativeName>
    <alternativeName>
        <fullName evidence="1">NDH-1 subunit A</fullName>
    </alternativeName>
    <alternativeName>
        <fullName evidence="1">NUO1</fullName>
    </alternativeName>
</protein>
<accession>A9HNA0</accession>
<accession>B5ZEB7</accession>